<dbReference type="EMBL" id="AE013598">
    <property type="protein sequence ID" value="AAW77135.1"/>
    <property type="status" value="ALT_INIT"/>
    <property type="molecule type" value="Genomic_DNA"/>
</dbReference>
<dbReference type="SMR" id="Q5GVY6"/>
<dbReference type="STRING" id="291331.XOO3881"/>
<dbReference type="KEGG" id="xoo:XOO3881"/>
<dbReference type="HOGENOM" id="CLU_033732_1_0_6"/>
<dbReference type="Proteomes" id="UP000006735">
    <property type="component" value="Chromosome"/>
</dbReference>
<dbReference type="GO" id="GO:0005829">
    <property type="term" value="C:cytosol"/>
    <property type="evidence" value="ECO:0007669"/>
    <property type="project" value="TreeGrafter"/>
</dbReference>
<dbReference type="GO" id="GO:0005525">
    <property type="term" value="F:GTP binding"/>
    <property type="evidence" value="ECO:0007669"/>
    <property type="project" value="UniProtKB-UniRule"/>
</dbReference>
<dbReference type="GO" id="GO:0046872">
    <property type="term" value="F:metal ion binding"/>
    <property type="evidence" value="ECO:0007669"/>
    <property type="project" value="UniProtKB-KW"/>
</dbReference>
<dbReference type="GO" id="GO:0000917">
    <property type="term" value="P:division septum assembly"/>
    <property type="evidence" value="ECO:0007669"/>
    <property type="project" value="UniProtKB-KW"/>
</dbReference>
<dbReference type="CDD" id="cd01876">
    <property type="entry name" value="YihA_EngB"/>
    <property type="match status" value="1"/>
</dbReference>
<dbReference type="FunFam" id="3.40.50.300:FF:000098">
    <property type="entry name" value="Probable GTP-binding protein EngB"/>
    <property type="match status" value="1"/>
</dbReference>
<dbReference type="Gene3D" id="3.40.50.300">
    <property type="entry name" value="P-loop containing nucleotide triphosphate hydrolases"/>
    <property type="match status" value="1"/>
</dbReference>
<dbReference type="HAMAP" id="MF_00321">
    <property type="entry name" value="GTPase_EngB"/>
    <property type="match status" value="1"/>
</dbReference>
<dbReference type="InterPro" id="IPR030393">
    <property type="entry name" value="G_ENGB_dom"/>
</dbReference>
<dbReference type="InterPro" id="IPR006073">
    <property type="entry name" value="GTP-bd"/>
</dbReference>
<dbReference type="InterPro" id="IPR019987">
    <property type="entry name" value="GTP-bd_ribosome_bio_YsxC"/>
</dbReference>
<dbReference type="InterPro" id="IPR027417">
    <property type="entry name" value="P-loop_NTPase"/>
</dbReference>
<dbReference type="NCBIfam" id="TIGR03598">
    <property type="entry name" value="GTPase_YsxC"/>
    <property type="match status" value="1"/>
</dbReference>
<dbReference type="PANTHER" id="PTHR11649:SF13">
    <property type="entry name" value="ENGB-TYPE G DOMAIN-CONTAINING PROTEIN"/>
    <property type="match status" value="1"/>
</dbReference>
<dbReference type="PANTHER" id="PTHR11649">
    <property type="entry name" value="MSS1/TRME-RELATED GTP-BINDING PROTEIN"/>
    <property type="match status" value="1"/>
</dbReference>
<dbReference type="Pfam" id="PF01926">
    <property type="entry name" value="MMR_HSR1"/>
    <property type="match status" value="1"/>
</dbReference>
<dbReference type="SUPFAM" id="SSF52540">
    <property type="entry name" value="P-loop containing nucleoside triphosphate hydrolases"/>
    <property type="match status" value="1"/>
</dbReference>
<dbReference type="PROSITE" id="PS51706">
    <property type="entry name" value="G_ENGB"/>
    <property type="match status" value="1"/>
</dbReference>
<protein>
    <recommendedName>
        <fullName evidence="1">Probable GTP-binding protein EngB</fullName>
    </recommendedName>
</protein>
<reference key="1">
    <citation type="journal article" date="2005" name="Nucleic Acids Res.">
        <title>The genome sequence of Xanthomonas oryzae pathovar oryzae KACC10331, the bacterial blight pathogen of rice.</title>
        <authorList>
            <person name="Lee B.-M."/>
            <person name="Park Y.-J."/>
            <person name="Park D.-S."/>
            <person name="Kang H.-W."/>
            <person name="Kim J.-G."/>
            <person name="Song E.-S."/>
            <person name="Park I.-C."/>
            <person name="Yoon U.-H."/>
            <person name="Hahn J.-H."/>
            <person name="Koo B.-S."/>
            <person name="Lee G.-B."/>
            <person name="Kim H."/>
            <person name="Park H.-S."/>
            <person name="Yoon K.-O."/>
            <person name="Kim J.-H."/>
            <person name="Jung C.-H."/>
            <person name="Koh N.-H."/>
            <person name="Seo J.-S."/>
            <person name="Go S.-J."/>
        </authorList>
    </citation>
    <scope>NUCLEOTIDE SEQUENCE [LARGE SCALE GENOMIC DNA]</scope>
    <source>
        <strain>KACC10331 / KXO85</strain>
    </source>
</reference>
<proteinExistence type="inferred from homology"/>
<keyword id="KW-0131">Cell cycle</keyword>
<keyword id="KW-0132">Cell division</keyword>
<keyword id="KW-0342">GTP-binding</keyword>
<keyword id="KW-0460">Magnesium</keyword>
<keyword id="KW-0479">Metal-binding</keyword>
<keyword id="KW-0547">Nucleotide-binding</keyword>
<keyword id="KW-1185">Reference proteome</keyword>
<keyword id="KW-0717">Septation</keyword>
<organism>
    <name type="scientific">Xanthomonas oryzae pv. oryzae (strain KACC10331 / KXO85)</name>
    <dbReference type="NCBI Taxonomy" id="291331"/>
    <lineage>
        <taxon>Bacteria</taxon>
        <taxon>Pseudomonadati</taxon>
        <taxon>Pseudomonadota</taxon>
        <taxon>Gammaproteobacteria</taxon>
        <taxon>Lysobacterales</taxon>
        <taxon>Lysobacteraceae</taxon>
        <taxon>Xanthomonas</taxon>
    </lineage>
</organism>
<sequence length="207" mass="23105">MSLLIEQARYHLSAHNARQLPDDGGYEVAFAGRSNAGKSSALNALTRQNALARVSKTPGRTQQLVFFQIQPERYLVDLPGYGYAKVPQDLQAHWQAFIDRYFRTREALRGLVVVMDIRHPLKDYDLQMLGYAAERGLPAHGLLTKADKLGRGQQMQTLQKVKKEVTSRFGDSVTVQTYSGQSRQGVDELRGIVGGWLGLIAEPLAEH</sequence>
<feature type="chain" id="PRO_0000269480" description="Probable GTP-binding protein EngB">
    <location>
        <begin position="1"/>
        <end position="207"/>
    </location>
</feature>
<feature type="domain" description="EngB-type G" evidence="1">
    <location>
        <begin position="24"/>
        <end position="199"/>
    </location>
</feature>
<feature type="binding site" evidence="1">
    <location>
        <begin position="32"/>
        <end position="39"/>
    </location>
    <ligand>
        <name>GTP</name>
        <dbReference type="ChEBI" id="CHEBI:37565"/>
    </ligand>
</feature>
<feature type="binding site" evidence="1">
    <location>
        <position position="39"/>
    </location>
    <ligand>
        <name>Mg(2+)</name>
        <dbReference type="ChEBI" id="CHEBI:18420"/>
    </ligand>
</feature>
<feature type="binding site" evidence="1">
    <location>
        <begin position="59"/>
        <end position="63"/>
    </location>
    <ligand>
        <name>GTP</name>
        <dbReference type="ChEBI" id="CHEBI:37565"/>
    </ligand>
</feature>
<feature type="binding site" evidence="1">
    <location>
        <position position="61"/>
    </location>
    <ligand>
        <name>Mg(2+)</name>
        <dbReference type="ChEBI" id="CHEBI:18420"/>
    </ligand>
</feature>
<feature type="binding site" evidence="1">
    <location>
        <begin position="77"/>
        <end position="80"/>
    </location>
    <ligand>
        <name>GTP</name>
        <dbReference type="ChEBI" id="CHEBI:37565"/>
    </ligand>
</feature>
<feature type="binding site" evidence="1">
    <location>
        <begin position="144"/>
        <end position="147"/>
    </location>
    <ligand>
        <name>GTP</name>
        <dbReference type="ChEBI" id="CHEBI:37565"/>
    </ligand>
</feature>
<feature type="binding site" evidence="1">
    <location>
        <begin position="178"/>
        <end position="180"/>
    </location>
    <ligand>
        <name>GTP</name>
        <dbReference type="ChEBI" id="CHEBI:37565"/>
    </ligand>
</feature>
<gene>
    <name evidence="1" type="primary">engB</name>
    <name type="ordered locus">XOO3881</name>
</gene>
<name>ENGB_XANOR</name>
<evidence type="ECO:0000255" key="1">
    <source>
        <dbReference type="HAMAP-Rule" id="MF_00321"/>
    </source>
</evidence>
<evidence type="ECO:0000305" key="2"/>
<accession>Q5GVY6</accession>
<comment type="function">
    <text evidence="1">Necessary for normal cell division and for the maintenance of normal septation.</text>
</comment>
<comment type="cofactor">
    <cofactor evidence="1">
        <name>Mg(2+)</name>
        <dbReference type="ChEBI" id="CHEBI:18420"/>
    </cofactor>
</comment>
<comment type="similarity">
    <text evidence="1">Belongs to the TRAFAC class TrmE-Era-EngA-EngB-Septin-like GTPase superfamily. EngB GTPase family.</text>
</comment>
<comment type="sequence caution" evidence="2">
    <conflict type="erroneous initiation">
        <sequence resource="EMBL-CDS" id="AAW77135"/>
    </conflict>
</comment>